<feature type="chain" id="PRO_1000133271" description="Isocitrate dehydrogenase kinase/phosphatase">
    <location>
        <begin position="1"/>
        <end position="577"/>
    </location>
</feature>
<feature type="active site" evidence="1">
    <location>
        <position position="371"/>
    </location>
</feature>
<feature type="binding site" evidence="1">
    <location>
        <begin position="315"/>
        <end position="321"/>
    </location>
    <ligand>
        <name>ATP</name>
        <dbReference type="ChEBI" id="CHEBI:30616"/>
    </ligand>
</feature>
<feature type="binding site" evidence="1">
    <location>
        <position position="336"/>
    </location>
    <ligand>
        <name>ATP</name>
        <dbReference type="ChEBI" id="CHEBI:30616"/>
    </ligand>
</feature>
<sequence>MPRGLELLIAQTILQGFDAQYGRFLEVTSGAQQRFEQADWHAVQQAMKSRIHLYDHHVGLVVEQLRCITNGQSTDAAFLLRVKEHYTRLLPDYPRFEIAESFFNSVYCRLFDHRSLTPERLFIFSSQPERRFRTIPRPLAKDFYPDHGWESLLMRVISDLPLRLRWQNKSRDIHYIIRHLTEMLGTDNLAESHLQVANELFYRNKAAWLVGKLNTPFGTLPFLLPIHQTDDGELFIDTCLTTTAEASIVFGFARSYFMVYAPLPAALVEWLREILPGKTTAELYMAIGCQKHAKTESYREYLVYLQGCNEQFIEAPGIRGMVMLVFTLPGFDRVFKVIKDKFAPQKEMSAAHVRACYQLVKEHDRVGRMADTQEFENFVLEKRHISPTLMELLLQEAAEKITDLGEQIVIRHLYIERRMVPLNIWLEQVEGQQLRDAIEEYGNAIRQLAAANIFPGDMLFKNFGVTRHGRVVFYDYDEICYMTEVNFRDIPPSRYPEDELASEPWYSVSPGDVFPEEFRHWLCADPRIGPLFEEMHADLFRADYWRALQNRIREGHVEDVYAYRRRQRFSVRYRPQV</sequence>
<dbReference type="EC" id="2.7.11.5" evidence="1"/>
<dbReference type="EC" id="3.1.3.-" evidence="1"/>
<dbReference type="EMBL" id="CU928158">
    <property type="protein sequence ID" value="CAQ91492.1"/>
    <property type="molecule type" value="Genomic_DNA"/>
</dbReference>
<dbReference type="RefSeq" id="WP_001137284.1">
    <property type="nucleotide sequence ID" value="NC_011740.1"/>
</dbReference>
<dbReference type="SMR" id="B7LKA4"/>
<dbReference type="GeneID" id="75059343"/>
<dbReference type="KEGG" id="efe:EFER_4069"/>
<dbReference type="HOGENOM" id="CLU_033804_1_1_6"/>
<dbReference type="OrthoDB" id="5287793at2"/>
<dbReference type="Proteomes" id="UP000000745">
    <property type="component" value="Chromosome"/>
</dbReference>
<dbReference type="GO" id="GO:0005737">
    <property type="term" value="C:cytoplasm"/>
    <property type="evidence" value="ECO:0007669"/>
    <property type="project" value="UniProtKB-SubCell"/>
</dbReference>
<dbReference type="GO" id="GO:0008772">
    <property type="term" value="F:[isocitrate dehydrogenase (NADP+)] kinase activity"/>
    <property type="evidence" value="ECO:0007669"/>
    <property type="project" value="UniProtKB-UniRule"/>
</dbReference>
<dbReference type="GO" id="GO:0016208">
    <property type="term" value="F:AMP binding"/>
    <property type="evidence" value="ECO:0007669"/>
    <property type="project" value="TreeGrafter"/>
</dbReference>
<dbReference type="GO" id="GO:0005524">
    <property type="term" value="F:ATP binding"/>
    <property type="evidence" value="ECO:0007669"/>
    <property type="project" value="UniProtKB-UniRule"/>
</dbReference>
<dbReference type="GO" id="GO:0004721">
    <property type="term" value="F:phosphoprotein phosphatase activity"/>
    <property type="evidence" value="ECO:0007669"/>
    <property type="project" value="UniProtKB-KW"/>
</dbReference>
<dbReference type="GO" id="GO:0004674">
    <property type="term" value="F:protein serine/threonine kinase activity"/>
    <property type="evidence" value="ECO:0007669"/>
    <property type="project" value="UniProtKB-KW"/>
</dbReference>
<dbReference type="GO" id="GO:0006006">
    <property type="term" value="P:glucose metabolic process"/>
    <property type="evidence" value="ECO:0007669"/>
    <property type="project" value="InterPro"/>
</dbReference>
<dbReference type="GO" id="GO:0006097">
    <property type="term" value="P:glyoxylate cycle"/>
    <property type="evidence" value="ECO:0007669"/>
    <property type="project" value="UniProtKB-UniRule"/>
</dbReference>
<dbReference type="GO" id="GO:0006099">
    <property type="term" value="P:tricarboxylic acid cycle"/>
    <property type="evidence" value="ECO:0007669"/>
    <property type="project" value="UniProtKB-UniRule"/>
</dbReference>
<dbReference type="HAMAP" id="MF_00747">
    <property type="entry name" value="AceK"/>
    <property type="match status" value="1"/>
</dbReference>
<dbReference type="InterPro" id="IPR046855">
    <property type="entry name" value="AceK_kinase"/>
</dbReference>
<dbReference type="InterPro" id="IPR046854">
    <property type="entry name" value="AceK_regulatory"/>
</dbReference>
<dbReference type="InterPro" id="IPR010452">
    <property type="entry name" value="Isocitrate_DH_AceK"/>
</dbReference>
<dbReference type="NCBIfam" id="NF002804">
    <property type="entry name" value="PRK02946.1"/>
    <property type="match status" value="1"/>
</dbReference>
<dbReference type="PANTHER" id="PTHR39559">
    <property type="match status" value="1"/>
</dbReference>
<dbReference type="PANTHER" id="PTHR39559:SF1">
    <property type="entry name" value="ISOCITRATE DEHYDROGENASE KINASE_PHOSPHATASE"/>
    <property type="match status" value="1"/>
</dbReference>
<dbReference type="Pfam" id="PF06315">
    <property type="entry name" value="AceK_kinase"/>
    <property type="match status" value="1"/>
</dbReference>
<dbReference type="Pfam" id="PF20423">
    <property type="entry name" value="AceK_regulatory"/>
    <property type="match status" value="1"/>
</dbReference>
<dbReference type="PIRSF" id="PIRSF000719">
    <property type="entry name" value="AceK"/>
    <property type="match status" value="1"/>
</dbReference>
<name>ACEK_ESCF3</name>
<reference key="1">
    <citation type="journal article" date="2009" name="PLoS Genet.">
        <title>Organised genome dynamics in the Escherichia coli species results in highly diverse adaptive paths.</title>
        <authorList>
            <person name="Touchon M."/>
            <person name="Hoede C."/>
            <person name="Tenaillon O."/>
            <person name="Barbe V."/>
            <person name="Baeriswyl S."/>
            <person name="Bidet P."/>
            <person name="Bingen E."/>
            <person name="Bonacorsi S."/>
            <person name="Bouchier C."/>
            <person name="Bouvet O."/>
            <person name="Calteau A."/>
            <person name="Chiapello H."/>
            <person name="Clermont O."/>
            <person name="Cruveiller S."/>
            <person name="Danchin A."/>
            <person name="Diard M."/>
            <person name="Dossat C."/>
            <person name="Karoui M.E."/>
            <person name="Frapy E."/>
            <person name="Garry L."/>
            <person name="Ghigo J.M."/>
            <person name="Gilles A.M."/>
            <person name="Johnson J."/>
            <person name="Le Bouguenec C."/>
            <person name="Lescat M."/>
            <person name="Mangenot S."/>
            <person name="Martinez-Jehanne V."/>
            <person name="Matic I."/>
            <person name="Nassif X."/>
            <person name="Oztas S."/>
            <person name="Petit M.A."/>
            <person name="Pichon C."/>
            <person name="Rouy Z."/>
            <person name="Ruf C.S."/>
            <person name="Schneider D."/>
            <person name="Tourret J."/>
            <person name="Vacherie B."/>
            <person name="Vallenet D."/>
            <person name="Medigue C."/>
            <person name="Rocha E.P.C."/>
            <person name="Denamur E."/>
        </authorList>
    </citation>
    <scope>NUCLEOTIDE SEQUENCE [LARGE SCALE GENOMIC DNA]</scope>
    <source>
        <strain>ATCC 35469 / DSM 13698 / BCRC 15582 / CCUG 18766 / IAM 14443 / JCM 21226 / LMG 7866 / NBRC 102419 / NCTC 12128 / CDC 0568-73</strain>
    </source>
</reference>
<comment type="function">
    <text evidence="1">Bifunctional enzyme which can phosphorylate or dephosphorylate isocitrate dehydrogenase (IDH) on a specific serine residue. This is a regulatory mechanism which enables bacteria to bypass the Krebs cycle via the glyoxylate shunt in response to the source of carbon. When bacteria are grown on glucose, IDH is fully active and unphosphorylated, but when grown on acetate or ethanol, the activity of IDH declines drastically concomitant with its phosphorylation.</text>
</comment>
<comment type="catalytic activity">
    <reaction evidence="1">
        <text>L-seryl-[isocitrate dehydrogenase] + ATP = O-phospho-L-seryl-[isocitrate dehydrogenase] + ADP + H(+)</text>
        <dbReference type="Rhea" id="RHEA:43540"/>
        <dbReference type="Rhea" id="RHEA-COMP:10605"/>
        <dbReference type="Rhea" id="RHEA-COMP:10606"/>
        <dbReference type="ChEBI" id="CHEBI:15378"/>
        <dbReference type="ChEBI" id="CHEBI:29999"/>
        <dbReference type="ChEBI" id="CHEBI:30616"/>
        <dbReference type="ChEBI" id="CHEBI:83421"/>
        <dbReference type="ChEBI" id="CHEBI:456216"/>
        <dbReference type="EC" id="2.7.11.5"/>
    </reaction>
</comment>
<comment type="subcellular location">
    <subcellularLocation>
        <location evidence="1">Cytoplasm</location>
    </subcellularLocation>
</comment>
<comment type="similarity">
    <text evidence="1">Belongs to the AceK family.</text>
</comment>
<protein>
    <recommendedName>
        <fullName evidence="1">Isocitrate dehydrogenase kinase/phosphatase</fullName>
        <shortName evidence="1">IDH kinase/phosphatase</shortName>
        <shortName evidence="1">IDHK/P</shortName>
        <ecNumber evidence="1">2.7.11.5</ecNumber>
        <ecNumber evidence="1">3.1.3.-</ecNumber>
    </recommendedName>
</protein>
<gene>
    <name evidence="1" type="primary">aceK</name>
    <name type="ordered locus">EFER_4069</name>
</gene>
<organism>
    <name type="scientific">Escherichia fergusonii (strain ATCC 35469 / DSM 13698 / CCUG 18766 / IAM 14443 / JCM 21226 / LMG 7866 / NBRC 102419 / NCTC 12128 / CDC 0568-73)</name>
    <dbReference type="NCBI Taxonomy" id="585054"/>
    <lineage>
        <taxon>Bacteria</taxon>
        <taxon>Pseudomonadati</taxon>
        <taxon>Pseudomonadota</taxon>
        <taxon>Gammaproteobacteria</taxon>
        <taxon>Enterobacterales</taxon>
        <taxon>Enterobacteriaceae</taxon>
        <taxon>Escherichia</taxon>
    </lineage>
</organism>
<accession>B7LKA4</accession>
<evidence type="ECO:0000255" key="1">
    <source>
        <dbReference type="HAMAP-Rule" id="MF_00747"/>
    </source>
</evidence>
<proteinExistence type="inferred from homology"/>
<keyword id="KW-0067">ATP-binding</keyword>
<keyword id="KW-0963">Cytoplasm</keyword>
<keyword id="KW-0329">Glyoxylate bypass</keyword>
<keyword id="KW-0378">Hydrolase</keyword>
<keyword id="KW-0418">Kinase</keyword>
<keyword id="KW-0547">Nucleotide-binding</keyword>
<keyword id="KW-0904">Protein phosphatase</keyword>
<keyword id="KW-0723">Serine/threonine-protein kinase</keyword>
<keyword id="KW-0808">Transferase</keyword>
<keyword id="KW-0816">Tricarboxylic acid cycle</keyword>